<accession>Q02Y52</accession>
<gene>
    <name evidence="1" type="primary">purC</name>
    <name type="ordered locus">LACR_1622</name>
</gene>
<feature type="chain" id="PRO_1000018719" description="Phosphoribosylaminoimidazole-succinocarboxamide synthase">
    <location>
        <begin position="1"/>
        <end position="236"/>
    </location>
</feature>
<sequence>MEKETLLYEGKAKKLYFTDDSNVLWVEYCDQATALNGARKEQITGKGALNNQITSLIFEKLNAEGLETHFIKKLSKTEQLNKKVSIIPLEVVLRNVVAGSFAKRFGLEEGIVLEEPIVEFYYKDDALDDPFINDEHVKFLNIASDSEIEFLKKETRKINKILKKIWTEIGLTLVDFKLEFGRLADGSIILADEISPDTSRLWDAKGQHMDKDVFRRNIGDLIETYTEVLNLLEKTK</sequence>
<proteinExistence type="inferred from homology"/>
<dbReference type="EC" id="6.3.2.6" evidence="1"/>
<dbReference type="EMBL" id="CP000425">
    <property type="protein sequence ID" value="ABJ73120.1"/>
    <property type="molecule type" value="Genomic_DNA"/>
</dbReference>
<dbReference type="RefSeq" id="WP_011676479.1">
    <property type="nucleotide sequence ID" value="NC_008527.1"/>
</dbReference>
<dbReference type="SMR" id="Q02Y52"/>
<dbReference type="KEGG" id="llc:LACR_1622"/>
<dbReference type="HOGENOM" id="CLU_061495_2_0_9"/>
<dbReference type="UniPathway" id="UPA00074">
    <property type="reaction ID" value="UER00131"/>
</dbReference>
<dbReference type="Proteomes" id="UP000000240">
    <property type="component" value="Chromosome"/>
</dbReference>
<dbReference type="GO" id="GO:0005524">
    <property type="term" value="F:ATP binding"/>
    <property type="evidence" value="ECO:0007669"/>
    <property type="project" value="UniProtKB-KW"/>
</dbReference>
<dbReference type="GO" id="GO:0004639">
    <property type="term" value="F:phosphoribosylaminoimidazolesuccinocarboxamide synthase activity"/>
    <property type="evidence" value="ECO:0007669"/>
    <property type="project" value="UniProtKB-UniRule"/>
</dbReference>
<dbReference type="GO" id="GO:0006189">
    <property type="term" value="P:'de novo' IMP biosynthetic process"/>
    <property type="evidence" value="ECO:0007669"/>
    <property type="project" value="UniProtKB-UniRule"/>
</dbReference>
<dbReference type="GO" id="GO:0009236">
    <property type="term" value="P:cobalamin biosynthetic process"/>
    <property type="evidence" value="ECO:0007669"/>
    <property type="project" value="InterPro"/>
</dbReference>
<dbReference type="CDD" id="cd01415">
    <property type="entry name" value="SAICAR_synt_PurC"/>
    <property type="match status" value="1"/>
</dbReference>
<dbReference type="FunFam" id="3.30.200.20:FF:000189">
    <property type="entry name" value="Phosphoribosylaminoimidazole-succinocarboxamide synthase"/>
    <property type="match status" value="1"/>
</dbReference>
<dbReference type="FunFam" id="3.30.470.20:FF:000006">
    <property type="entry name" value="Phosphoribosylaminoimidazole-succinocarboxamide synthase"/>
    <property type="match status" value="1"/>
</dbReference>
<dbReference type="Gene3D" id="3.30.470.20">
    <property type="entry name" value="ATP-grasp fold, B domain"/>
    <property type="match status" value="1"/>
</dbReference>
<dbReference type="Gene3D" id="3.30.200.20">
    <property type="entry name" value="Phosphorylase Kinase, domain 1"/>
    <property type="match status" value="1"/>
</dbReference>
<dbReference type="HAMAP" id="MF_00137">
    <property type="entry name" value="SAICAR_synth"/>
    <property type="match status" value="1"/>
</dbReference>
<dbReference type="InterPro" id="IPR028923">
    <property type="entry name" value="SAICAR_synt/ADE2_N"/>
</dbReference>
<dbReference type="InterPro" id="IPR033934">
    <property type="entry name" value="SAICAR_synt_PurC"/>
</dbReference>
<dbReference type="InterPro" id="IPR001636">
    <property type="entry name" value="SAICAR_synth"/>
</dbReference>
<dbReference type="InterPro" id="IPR050089">
    <property type="entry name" value="SAICAR_synthetase"/>
</dbReference>
<dbReference type="InterPro" id="IPR018236">
    <property type="entry name" value="SAICAR_synthetase_CS"/>
</dbReference>
<dbReference type="NCBIfam" id="TIGR00081">
    <property type="entry name" value="purC"/>
    <property type="match status" value="1"/>
</dbReference>
<dbReference type="PANTHER" id="PTHR43599">
    <property type="entry name" value="MULTIFUNCTIONAL PROTEIN ADE2"/>
    <property type="match status" value="1"/>
</dbReference>
<dbReference type="PANTHER" id="PTHR43599:SF3">
    <property type="entry name" value="SI:DKEY-6E2.2"/>
    <property type="match status" value="1"/>
</dbReference>
<dbReference type="Pfam" id="PF01259">
    <property type="entry name" value="SAICAR_synt"/>
    <property type="match status" value="1"/>
</dbReference>
<dbReference type="SUPFAM" id="SSF56104">
    <property type="entry name" value="SAICAR synthase-like"/>
    <property type="match status" value="1"/>
</dbReference>
<dbReference type="PROSITE" id="PS01057">
    <property type="entry name" value="SAICAR_SYNTHETASE_1"/>
    <property type="match status" value="1"/>
</dbReference>
<dbReference type="PROSITE" id="PS01058">
    <property type="entry name" value="SAICAR_SYNTHETASE_2"/>
    <property type="match status" value="1"/>
</dbReference>
<evidence type="ECO:0000255" key="1">
    <source>
        <dbReference type="HAMAP-Rule" id="MF_00137"/>
    </source>
</evidence>
<name>PUR7_LACLS</name>
<protein>
    <recommendedName>
        <fullName evidence="1">Phosphoribosylaminoimidazole-succinocarboxamide synthase</fullName>
        <ecNumber evidence="1">6.3.2.6</ecNumber>
    </recommendedName>
    <alternativeName>
        <fullName evidence="1">SAICAR synthetase</fullName>
    </alternativeName>
</protein>
<reference key="1">
    <citation type="journal article" date="2006" name="Proc. Natl. Acad. Sci. U.S.A.">
        <title>Comparative genomics of the lactic acid bacteria.</title>
        <authorList>
            <person name="Makarova K.S."/>
            <person name="Slesarev A."/>
            <person name="Wolf Y.I."/>
            <person name="Sorokin A."/>
            <person name="Mirkin B."/>
            <person name="Koonin E.V."/>
            <person name="Pavlov A."/>
            <person name="Pavlova N."/>
            <person name="Karamychev V."/>
            <person name="Polouchine N."/>
            <person name="Shakhova V."/>
            <person name="Grigoriev I."/>
            <person name="Lou Y."/>
            <person name="Rohksar D."/>
            <person name="Lucas S."/>
            <person name="Huang K."/>
            <person name="Goodstein D.M."/>
            <person name="Hawkins T."/>
            <person name="Plengvidhya V."/>
            <person name="Welker D."/>
            <person name="Hughes J."/>
            <person name="Goh Y."/>
            <person name="Benson A."/>
            <person name="Baldwin K."/>
            <person name="Lee J.-H."/>
            <person name="Diaz-Muniz I."/>
            <person name="Dosti B."/>
            <person name="Smeianov V."/>
            <person name="Wechter W."/>
            <person name="Barabote R."/>
            <person name="Lorca G."/>
            <person name="Altermann E."/>
            <person name="Barrangou R."/>
            <person name="Ganesan B."/>
            <person name="Xie Y."/>
            <person name="Rawsthorne H."/>
            <person name="Tamir D."/>
            <person name="Parker C."/>
            <person name="Breidt F."/>
            <person name="Broadbent J.R."/>
            <person name="Hutkins R."/>
            <person name="O'Sullivan D."/>
            <person name="Steele J."/>
            <person name="Unlu G."/>
            <person name="Saier M.H. Jr."/>
            <person name="Klaenhammer T."/>
            <person name="Richardson P."/>
            <person name="Kozyavkin S."/>
            <person name="Weimer B.C."/>
            <person name="Mills D.A."/>
        </authorList>
    </citation>
    <scope>NUCLEOTIDE SEQUENCE [LARGE SCALE GENOMIC DNA]</scope>
    <source>
        <strain>SK11</strain>
    </source>
</reference>
<comment type="catalytic activity">
    <reaction evidence="1">
        <text>5-amino-1-(5-phospho-D-ribosyl)imidazole-4-carboxylate + L-aspartate + ATP = (2S)-2-[5-amino-1-(5-phospho-beta-D-ribosyl)imidazole-4-carboxamido]succinate + ADP + phosphate + 2 H(+)</text>
        <dbReference type="Rhea" id="RHEA:22628"/>
        <dbReference type="ChEBI" id="CHEBI:15378"/>
        <dbReference type="ChEBI" id="CHEBI:29991"/>
        <dbReference type="ChEBI" id="CHEBI:30616"/>
        <dbReference type="ChEBI" id="CHEBI:43474"/>
        <dbReference type="ChEBI" id="CHEBI:58443"/>
        <dbReference type="ChEBI" id="CHEBI:77657"/>
        <dbReference type="ChEBI" id="CHEBI:456216"/>
        <dbReference type="EC" id="6.3.2.6"/>
    </reaction>
</comment>
<comment type="pathway">
    <text evidence="1">Purine metabolism; IMP biosynthesis via de novo pathway; 5-amino-1-(5-phospho-D-ribosyl)imidazole-4-carboxamide from 5-amino-1-(5-phospho-D-ribosyl)imidazole-4-carboxylate: step 1/2.</text>
</comment>
<comment type="similarity">
    <text evidence="1">Belongs to the SAICAR synthetase family.</text>
</comment>
<keyword id="KW-0067">ATP-binding</keyword>
<keyword id="KW-0436">Ligase</keyword>
<keyword id="KW-0547">Nucleotide-binding</keyword>
<keyword id="KW-0658">Purine biosynthesis</keyword>
<organism>
    <name type="scientific">Lactococcus lactis subsp. cremoris (strain SK11)</name>
    <dbReference type="NCBI Taxonomy" id="272622"/>
    <lineage>
        <taxon>Bacteria</taxon>
        <taxon>Bacillati</taxon>
        <taxon>Bacillota</taxon>
        <taxon>Bacilli</taxon>
        <taxon>Lactobacillales</taxon>
        <taxon>Streptococcaceae</taxon>
        <taxon>Lactococcus</taxon>
        <taxon>Lactococcus cremoris subsp. cremoris</taxon>
    </lineage>
</organism>